<accession>Q72IV3</accession>
<evidence type="ECO:0000255" key="1">
    <source>
        <dbReference type="HAMAP-Rule" id="MF_00384"/>
    </source>
</evidence>
<reference key="1">
    <citation type="journal article" date="2004" name="Nat. Biotechnol.">
        <title>The genome sequence of the extreme thermophile Thermus thermophilus.</title>
        <authorList>
            <person name="Henne A."/>
            <person name="Brueggemann H."/>
            <person name="Raasch C."/>
            <person name="Wiezer A."/>
            <person name="Hartsch T."/>
            <person name="Liesegang H."/>
            <person name="Johann A."/>
            <person name="Lienard T."/>
            <person name="Gohl O."/>
            <person name="Martinez-Arias R."/>
            <person name="Jacobi C."/>
            <person name="Starkuviene V."/>
            <person name="Schlenczeck S."/>
            <person name="Dencker S."/>
            <person name="Huber R."/>
            <person name="Klenk H.-P."/>
            <person name="Kramer W."/>
            <person name="Merkl R."/>
            <person name="Gottschalk G."/>
            <person name="Fritz H.-J."/>
        </authorList>
    </citation>
    <scope>NUCLEOTIDE SEQUENCE [LARGE SCALE GENOMIC DNA]</scope>
    <source>
        <strain>ATCC BAA-163 / DSM 7039 / HB27</strain>
    </source>
</reference>
<name>KHSE_THET2</name>
<sequence>MDLPRLYVPATLANLGSGFDALGVALDLYLEVEAHPAPEDAFLYEGEGHVEGTDNLIHEGYRAGMRALGLEPFPLRVRAFNPIPLARGMGSSSAALVAGVALADRLSGGRLGREGVFRVAAGLEGHPDNVAPAVFGGFVAALSDPPLAIPLPRPEGVRFVLAVPPYEVPTPLAREALPREVPLEDAIYNLARSALWPAALSSGKLEALREACRDRLHQPHRAPLMPGVLEAIEGALEAGALAAFVGGAGPTLAALARAGEEAPVIRALSAYRGPEGRTLVLGIGEGYFWKET</sequence>
<protein>
    <recommendedName>
        <fullName evidence="1">Homoserine kinase</fullName>
        <shortName evidence="1">HK</shortName>
        <shortName evidence="1">HSK</shortName>
        <ecNumber evidence="1">2.7.1.39</ecNumber>
    </recommendedName>
</protein>
<gene>
    <name evidence="1" type="primary">thrB</name>
    <name type="ordered locus">TT_C1028</name>
</gene>
<feature type="chain" id="PRO_0000156626" description="Homoserine kinase">
    <location>
        <begin position="1"/>
        <end position="292"/>
    </location>
</feature>
<feature type="binding site" evidence="1">
    <location>
        <begin position="84"/>
        <end position="94"/>
    </location>
    <ligand>
        <name>ATP</name>
        <dbReference type="ChEBI" id="CHEBI:30616"/>
    </ligand>
</feature>
<organism>
    <name type="scientific">Thermus thermophilus (strain ATCC BAA-163 / DSM 7039 / HB27)</name>
    <dbReference type="NCBI Taxonomy" id="262724"/>
    <lineage>
        <taxon>Bacteria</taxon>
        <taxon>Thermotogati</taxon>
        <taxon>Deinococcota</taxon>
        <taxon>Deinococci</taxon>
        <taxon>Thermales</taxon>
        <taxon>Thermaceae</taxon>
        <taxon>Thermus</taxon>
    </lineage>
</organism>
<comment type="function">
    <text evidence="1">Catalyzes the ATP-dependent phosphorylation of L-homoserine to L-homoserine phosphate.</text>
</comment>
<comment type="catalytic activity">
    <reaction evidence="1">
        <text>L-homoserine + ATP = O-phospho-L-homoserine + ADP + H(+)</text>
        <dbReference type="Rhea" id="RHEA:13985"/>
        <dbReference type="ChEBI" id="CHEBI:15378"/>
        <dbReference type="ChEBI" id="CHEBI:30616"/>
        <dbReference type="ChEBI" id="CHEBI:57476"/>
        <dbReference type="ChEBI" id="CHEBI:57590"/>
        <dbReference type="ChEBI" id="CHEBI:456216"/>
        <dbReference type="EC" id="2.7.1.39"/>
    </reaction>
</comment>
<comment type="pathway">
    <text evidence="1">Amino-acid biosynthesis; L-threonine biosynthesis; L-threonine from L-aspartate: step 4/5.</text>
</comment>
<comment type="subcellular location">
    <subcellularLocation>
        <location evidence="1">Cytoplasm</location>
    </subcellularLocation>
</comment>
<comment type="similarity">
    <text evidence="1">Belongs to the GHMP kinase family. Homoserine kinase subfamily.</text>
</comment>
<proteinExistence type="inferred from homology"/>
<keyword id="KW-0028">Amino-acid biosynthesis</keyword>
<keyword id="KW-0067">ATP-binding</keyword>
<keyword id="KW-0963">Cytoplasm</keyword>
<keyword id="KW-0418">Kinase</keyword>
<keyword id="KW-0547">Nucleotide-binding</keyword>
<keyword id="KW-0791">Threonine biosynthesis</keyword>
<keyword id="KW-0808">Transferase</keyword>
<dbReference type="EC" id="2.7.1.39" evidence="1"/>
<dbReference type="EMBL" id="AE017221">
    <property type="protein sequence ID" value="AAS81370.1"/>
    <property type="molecule type" value="Genomic_DNA"/>
</dbReference>
<dbReference type="RefSeq" id="WP_011173447.1">
    <property type="nucleotide sequence ID" value="NC_005835.1"/>
</dbReference>
<dbReference type="SMR" id="Q72IV3"/>
<dbReference type="KEGG" id="tth:TT_C1028"/>
<dbReference type="eggNOG" id="COG0083">
    <property type="taxonomic scope" value="Bacteria"/>
</dbReference>
<dbReference type="HOGENOM" id="CLU_041243_0_2_0"/>
<dbReference type="OrthoDB" id="9769912at2"/>
<dbReference type="UniPathway" id="UPA00050">
    <property type="reaction ID" value="UER00064"/>
</dbReference>
<dbReference type="Proteomes" id="UP000000592">
    <property type="component" value="Chromosome"/>
</dbReference>
<dbReference type="GO" id="GO:0005737">
    <property type="term" value="C:cytoplasm"/>
    <property type="evidence" value="ECO:0007669"/>
    <property type="project" value="UniProtKB-SubCell"/>
</dbReference>
<dbReference type="GO" id="GO:0005524">
    <property type="term" value="F:ATP binding"/>
    <property type="evidence" value="ECO:0007669"/>
    <property type="project" value="UniProtKB-UniRule"/>
</dbReference>
<dbReference type="GO" id="GO:0004413">
    <property type="term" value="F:homoserine kinase activity"/>
    <property type="evidence" value="ECO:0007669"/>
    <property type="project" value="UniProtKB-UniRule"/>
</dbReference>
<dbReference type="GO" id="GO:0009088">
    <property type="term" value="P:threonine biosynthetic process"/>
    <property type="evidence" value="ECO:0007669"/>
    <property type="project" value="UniProtKB-UniRule"/>
</dbReference>
<dbReference type="Gene3D" id="3.30.230.10">
    <property type="match status" value="1"/>
</dbReference>
<dbReference type="Gene3D" id="3.30.70.890">
    <property type="entry name" value="GHMP kinase, C-terminal domain"/>
    <property type="match status" value="1"/>
</dbReference>
<dbReference type="HAMAP" id="MF_00384">
    <property type="entry name" value="Homoser_kinase"/>
    <property type="match status" value="1"/>
</dbReference>
<dbReference type="InterPro" id="IPR013750">
    <property type="entry name" value="GHMP_kinase_C_dom"/>
</dbReference>
<dbReference type="InterPro" id="IPR036554">
    <property type="entry name" value="GHMP_kinase_C_sf"/>
</dbReference>
<dbReference type="InterPro" id="IPR006204">
    <property type="entry name" value="GHMP_kinase_N_dom"/>
</dbReference>
<dbReference type="InterPro" id="IPR006203">
    <property type="entry name" value="GHMP_knse_ATP-bd_CS"/>
</dbReference>
<dbReference type="InterPro" id="IPR000870">
    <property type="entry name" value="Homoserine_kinase"/>
</dbReference>
<dbReference type="InterPro" id="IPR020568">
    <property type="entry name" value="Ribosomal_Su5_D2-typ_SF"/>
</dbReference>
<dbReference type="InterPro" id="IPR014721">
    <property type="entry name" value="Ribsml_uS5_D2-typ_fold_subgr"/>
</dbReference>
<dbReference type="NCBIfam" id="TIGR00191">
    <property type="entry name" value="thrB"/>
    <property type="match status" value="1"/>
</dbReference>
<dbReference type="PANTHER" id="PTHR20861:SF1">
    <property type="entry name" value="HOMOSERINE KINASE"/>
    <property type="match status" value="1"/>
</dbReference>
<dbReference type="PANTHER" id="PTHR20861">
    <property type="entry name" value="HOMOSERINE/4-DIPHOSPHOCYTIDYL-2-C-METHYL-D-ERYTHRITOL KINASE"/>
    <property type="match status" value="1"/>
</dbReference>
<dbReference type="Pfam" id="PF08544">
    <property type="entry name" value="GHMP_kinases_C"/>
    <property type="match status" value="1"/>
</dbReference>
<dbReference type="Pfam" id="PF00288">
    <property type="entry name" value="GHMP_kinases_N"/>
    <property type="match status" value="1"/>
</dbReference>
<dbReference type="PIRSF" id="PIRSF000676">
    <property type="entry name" value="Homoser_kin"/>
    <property type="match status" value="1"/>
</dbReference>
<dbReference type="PRINTS" id="PR00958">
    <property type="entry name" value="HOMSERKINASE"/>
</dbReference>
<dbReference type="SUPFAM" id="SSF55060">
    <property type="entry name" value="GHMP Kinase, C-terminal domain"/>
    <property type="match status" value="1"/>
</dbReference>
<dbReference type="SUPFAM" id="SSF54211">
    <property type="entry name" value="Ribosomal protein S5 domain 2-like"/>
    <property type="match status" value="1"/>
</dbReference>
<dbReference type="PROSITE" id="PS00627">
    <property type="entry name" value="GHMP_KINASES_ATP"/>
    <property type="match status" value="1"/>
</dbReference>